<organism>
    <name type="scientific">Bacillus caldolyticus</name>
    <dbReference type="NCBI Taxonomy" id="1394"/>
    <lineage>
        <taxon>Bacteria</taxon>
        <taxon>Bacillati</taxon>
        <taxon>Bacillota</taxon>
        <taxon>Bacilli</taxon>
        <taxon>Bacillales</taxon>
        <taxon>Anoxybacillaceae</taxon>
        <taxon>Geobacillus</taxon>
        <taxon>Geobacillus thermoleovorans group</taxon>
    </lineage>
</organism>
<accession>P0A3H1</accession>
<accession>P02346</accession>
<accession>P08822</accession>
<comment type="function">
    <text>Histone-like DNA-binding protein which is capable of wrapping DNA to stabilize it, and thus to prevent its denaturation under extreme environmental conditions.</text>
</comment>
<comment type="subunit">
    <text>Homodimer.</text>
</comment>
<comment type="similarity">
    <text evidence="3">Belongs to the bacterial histone-like protein family.</text>
</comment>
<dbReference type="EMBL" id="M73502">
    <property type="protein sequence ID" value="AAA22534.1"/>
    <property type="molecule type" value="Genomic_DNA"/>
</dbReference>
<dbReference type="PIR" id="JC1207">
    <property type="entry name" value="JC1207"/>
</dbReference>
<dbReference type="BMRB" id="P0A3H1"/>
<dbReference type="SMR" id="P0A3H1"/>
<dbReference type="GO" id="GO:0005829">
    <property type="term" value="C:cytosol"/>
    <property type="evidence" value="ECO:0007669"/>
    <property type="project" value="TreeGrafter"/>
</dbReference>
<dbReference type="GO" id="GO:0003677">
    <property type="term" value="F:DNA binding"/>
    <property type="evidence" value="ECO:0007669"/>
    <property type="project" value="UniProtKB-KW"/>
</dbReference>
<dbReference type="GO" id="GO:0030527">
    <property type="term" value="F:structural constituent of chromatin"/>
    <property type="evidence" value="ECO:0007669"/>
    <property type="project" value="InterPro"/>
</dbReference>
<dbReference type="GO" id="GO:0030261">
    <property type="term" value="P:chromosome condensation"/>
    <property type="evidence" value="ECO:0007669"/>
    <property type="project" value="UniProtKB-KW"/>
</dbReference>
<dbReference type="CDD" id="cd13831">
    <property type="entry name" value="HU"/>
    <property type="match status" value="1"/>
</dbReference>
<dbReference type="FunFam" id="4.10.520.10:FF:000001">
    <property type="entry name" value="DNA-binding protein HU"/>
    <property type="match status" value="1"/>
</dbReference>
<dbReference type="Gene3D" id="4.10.520.10">
    <property type="entry name" value="IHF-like DNA-binding proteins"/>
    <property type="match status" value="1"/>
</dbReference>
<dbReference type="InterPro" id="IPR000119">
    <property type="entry name" value="Hist_DNA-bd"/>
</dbReference>
<dbReference type="InterPro" id="IPR020816">
    <property type="entry name" value="Histone-like_DNA-bd_CS"/>
</dbReference>
<dbReference type="InterPro" id="IPR010992">
    <property type="entry name" value="IHF-like_DNA-bd_dom_sf"/>
</dbReference>
<dbReference type="PANTHER" id="PTHR33175">
    <property type="entry name" value="DNA-BINDING PROTEIN HU"/>
    <property type="match status" value="1"/>
</dbReference>
<dbReference type="PANTHER" id="PTHR33175:SF3">
    <property type="entry name" value="DNA-BINDING PROTEIN HU-BETA"/>
    <property type="match status" value="1"/>
</dbReference>
<dbReference type="Pfam" id="PF00216">
    <property type="entry name" value="Bac_DNA_binding"/>
    <property type="match status" value="1"/>
</dbReference>
<dbReference type="PRINTS" id="PR01727">
    <property type="entry name" value="DNABINDINGHU"/>
</dbReference>
<dbReference type="SMART" id="SM00411">
    <property type="entry name" value="BHL"/>
    <property type="match status" value="1"/>
</dbReference>
<dbReference type="SUPFAM" id="SSF47729">
    <property type="entry name" value="IHF-like DNA-binding proteins"/>
    <property type="match status" value="1"/>
</dbReference>
<dbReference type="PROSITE" id="PS00045">
    <property type="entry name" value="HISTONE_LIKE"/>
    <property type="match status" value="1"/>
</dbReference>
<name>DBH_BACCL</name>
<gene>
    <name type="primary">hup</name>
    <name type="synonym">hbs</name>
    <name type="synonym">hbsU</name>
</gene>
<keyword id="KW-0903">Direct protein sequencing</keyword>
<keyword id="KW-0226">DNA condensation</keyword>
<keyword id="KW-0238">DNA-binding</keyword>
<keyword id="KW-0597">Phosphoprotein</keyword>
<feature type="chain" id="PRO_0000104909" description="DNA-binding protein HU">
    <location>
        <begin position="1"/>
        <end position="90"/>
    </location>
</feature>
<feature type="region of interest" description="Disordered" evidence="2">
    <location>
        <begin position="56"/>
        <end position="90"/>
    </location>
</feature>
<feature type="modified residue" description="Phosphothreonine" evidence="1">
    <location>
        <position position="4"/>
    </location>
</feature>
<feature type="sequence conflict" description="In Ref. 2; AA sequence." evidence="3" ref="2">
    <original>A</original>
    <variation>T</variation>
    <location>
        <position position="9"/>
    </location>
</feature>
<feature type="sequence conflict" description="In Ref. 2; AA sequence." evidence="3" ref="2">
    <original>T</original>
    <variation>I</variation>
    <location>
        <position position="13"/>
    </location>
</feature>
<feature type="sequence conflict" description="In Ref. 2; AA sequence." evidence="3" ref="2">
    <original>D</original>
    <variation>E</variation>
    <location>
        <position position="30"/>
    </location>
</feature>
<sequence length="90" mass="9716">MNKTELINAVAETSGLSKKDATKAVDAVFDSITEALRKGDKVQLIGFGNFEVRERAARKGRNPQTGEEMEIPASKVPAFKPGKALKDAVK</sequence>
<protein>
    <recommendedName>
        <fullName>DNA-binding protein HU</fullName>
    </recommendedName>
    <alternativeName>
        <fullName>DNA-binding protein II</fullName>
    </alternativeName>
    <alternativeName>
        <fullName>HB</fullName>
    </alternativeName>
</protein>
<reference key="1">
    <citation type="journal article" date="1992" name="Gene">
        <title>The DNA-binding protein HU from mesophilic and thermophilic bacilli: gene cloning, overproduction and purification.</title>
        <authorList>
            <person name="Padas P.M."/>
            <person name="Wilson K.S."/>
            <person name="Vorgias C.E."/>
        </authorList>
    </citation>
    <scope>NUCLEOTIDE SEQUENCE [GENOMIC DNA]</scope>
</reference>
<reference key="2">
    <citation type="journal article" date="1987" name="Biol. Chem. Hoppe-Seyler">
        <title>Ribosomal proteins and DNA-binding protein II from the extreme thermophile Bacillus caldolyticus.</title>
        <authorList>
            <person name="Beck A."/>
            <person name="Dijk J."/>
            <person name="Reinhardt R."/>
        </authorList>
    </citation>
    <scope>PROTEIN SEQUENCE OF 1-39</scope>
</reference>
<proteinExistence type="evidence at protein level"/>
<evidence type="ECO:0000250" key="1"/>
<evidence type="ECO:0000256" key="2">
    <source>
        <dbReference type="SAM" id="MobiDB-lite"/>
    </source>
</evidence>
<evidence type="ECO:0000305" key="3"/>